<name>M2DH_PYRTR</name>
<accession>B2W2N2</accession>
<dbReference type="EC" id="1.1.1.67"/>
<dbReference type="EMBL" id="DS231617">
    <property type="protein sequence ID" value="EDU46518.1"/>
    <property type="molecule type" value="Genomic_DNA"/>
</dbReference>
<dbReference type="RefSeq" id="XP_001934013.1">
    <property type="nucleotide sequence ID" value="XM_001933978.1"/>
</dbReference>
<dbReference type="SMR" id="B2W2N2"/>
<dbReference type="FunCoup" id="B2W2N2">
    <property type="interactions" value="44"/>
</dbReference>
<dbReference type="STRING" id="426418.B2W2N2"/>
<dbReference type="EnsemblFungi" id="EDU46518">
    <property type="protein sequence ID" value="EDU46518"/>
    <property type="gene ID" value="PTRG_03680"/>
</dbReference>
<dbReference type="GeneID" id="6341912"/>
<dbReference type="KEGG" id="ptrr:6341912"/>
<dbReference type="eggNOG" id="ENOG502QT30">
    <property type="taxonomic scope" value="Eukaryota"/>
</dbReference>
<dbReference type="HOGENOM" id="CLU_027324_0_1_1"/>
<dbReference type="InParanoid" id="B2W2N2"/>
<dbReference type="OMA" id="IVASWAR"/>
<dbReference type="OrthoDB" id="6410at28556"/>
<dbReference type="Proteomes" id="UP000001471">
    <property type="component" value="Unassembled WGS sequence"/>
</dbReference>
<dbReference type="GO" id="GO:0050086">
    <property type="term" value="F:mannitol 2-dehydrogenase activity"/>
    <property type="evidence" value="ECO:0007669"/>
    <property type="project" value="UniProtKB-EC"/>
</dbReference>
<dbReference type="GO" id="GO:0046029">
    <property type="term" value="F:mannitol dehydrogenase activity"/>
    <property type="evidence" value="ECO:0007669"/>
    <property type="project" value="TreeGrafter"/>
</dbReference>
<dbReference type="FunFam" id="3.40.50.720:FF:000129">
    <property type="entry name" value="D-mannonate oxidoreductase"/>
    <property type="match status" value="1"/>
</dbReference>
<dbReference type="Gene3D" id="1.10.1040.10">
    <property type="entry name" value="N-(1-d-carboxylethyl)-l-norvaline Dehydrogenase, domain 2"/>
    <property type="match status" value="1"/>
</dbReference>
<dbReference type="Gene3D" id="3.40.50.720">
    <property type="entry name" value="NAD(P)-binding Rossmann-like Domain"/>
    <property type="match status" value="1"/>
</dbReference>
<dbReference type="InterPro" id="IPR008927">
    <property type="entry name" value="6-PGluconate_DH-like_C_sf"/>
</dbReference>
<dbReference type="InterPro" id="IPR013328">
    <property type="entry name" value="6PGD_dom2"/>
</dbReference>
<dbReference type="InterPro" id="IPR000669">
    <property type="entry name" value="Mannitol_DH"/>
</dbReference>
<dbReference type="InterPro" id="IPR050988">
    <property type="entry name" value="Mannitol_DH/Oxidoreductase"/>
</dbReference>
<dbReference type="InterPro" id="IPR013118">
    <property type="entry name" value="Mannitol_DH_C"/>
</dbReference>
<dbReference type="InterPro" id="IPR013131">
    <property type="entry name" value="Mannitol_DH_N"/>
</dbReference>
<dbReference type="InterPro" id="IPR036291">
    <property type="entry name" value="NAD(P)-bd_dom_sf"/>
</dbReference>
<dbReference type="PANTHER" id="PTHR43362:SF1">
    <property type="entry name" value="MANNITOL DEHYDROGENASE 2-RELATED"/>
    <property type="match status" value="1"/>
</dbReference>
<dbReference type="PANTHER" id="PTHR43362">
    <property type="entry name" value="MANNITOL DEHYDROGENASE DSF1-RELATED"/>
    <property type="match status" value="1"/>
</dbReference>
<dbReference type="Pfam" id="PF01232">
    <property type="entry name" value="Mannitol_dh"/>
    <property type="match status" value="1"/>
</dbReference>
<dbReference type="Pfam" id="PF08125">
    <property type="entry name" value="Mannitol_dh_C"/>
    <property type="match status" value="1"/>
</dbReference>
<dbReference type="PRINTS" id="PR00084">
    <property type="entry name" value="MTLDHDRGNASE"/>
</dbReference>
<dbReference type="SUPFAM" id="SSF48179">
    <property type="entry name" value="6-phosphogluconate dehydrogenase C-terminal domain-like"/>
    <property type="match status" value="1"/>
</dbReference>
<dbReference type="SUPFAM" id="SSF51735">
    <property type="entry name" value="NAD(P)-binding Rossmann-fold domains"/>
    <property type="match status" value="1"/>
</dbReference>
<sequence length="566" mass="62728">MPPQVARNLLRAARARAVFQSTRPAHRRPAAISCRFQSTEAVRQTPSDVYQAPPRGFVPRKEEKFVPTQSRKAAPAATLKLNSKNLSSLQNVSVPTYKRHGVKQGIVHVGVGGFHRAHLAAYVDTLLEQFNVQDWSICGVDLQPFAAPMRDALKPQDNLYTMIERAADGTSARVIGSITDYLFAPDSAEAVIAKMAHPDTHIVSMTVTESGYYMNENTHELQIDHPDVAADLAGEQPARTVFGYLYAAMARRHAAGLRPFTVLSCDNMQKNGDISRNMLVSFARHAGNNEVADWIASNGAFPNSMVDRITPRTNDEDKVSLAKNFGVEDAWPVVTEPFHQWVLEDKFVDGRPPFEKAGVQIVPDVHQVEEYEMIKLRLLNGSHSAMGYAGQLAGFTYIHEVISHPVYRQFVINMMQQEVKPLLPQIPGVSVDDYCNTLLGRFSNPTLKDELPRICLGGSGKIPQFIMPSIAEQIIAGGPLRRLTLVAAAWFRYNKGIDDAGNAFKVDDPMVEELQAKAAEGPIAQLQIKNLFGDDLRQDKRFVQELKTALEGLEREGALAMIEKYA</sequence>
<organism>
    <name type="scientific">Pyrenophora tritici-repentis (strain Pt-1C-BFP)</name>
    <name type="common">Wheat tan spot fungus</name>
    <name type="synonym">Drechslera tritici-repentis</name>
    <dbReference type="NCBI Taxonomy" id="426418"/>
    <lineage>
        <taxon>Eukaryota</taxon>
        <taxon>Fungi</taxon>
        <taxon>Dikarya</taxon>
        <taxon>Ascomycota</taxon>
        <taxon>Pezizomycotina</taxon>
        <taxon>Dothideomycetes</taxon>
        <taxon>Pleosporomycetidae</taxon>
        <taxon>Pleosporales</taxon>
        <taxon>Pleosporineae</taxon>
        <taxon>Pleosporaceae</taxon>
        <taxon>Pyrenophora</taxon>
    </lineage>
</organism>
<proteinExistence type="inferred from homology"/>
<comment type="function">
    <text evidence="1">Catalyzes the NAD(H)-dependent interconversion of D-fructose and D-mannitol in the mannitol metabolic pathway.</text>
</comment>
<comment type="catalytic activity">
    <reaction>
        <text>D-mannitol + NAD(+) = D-fructose + NADH + H(+)</text>
        <dbReference type="Rhea" id="RHEA:12084"/>
        <dbReference type="ChEBI" id="CHEBI:15378"/>
        <dbReference type="ChEBI" id="CHEBI:16899"/>
        <dbReference type="ChEBI" id="CHEBI:37721"/>
        <dbReference type="ChEBI" id="CHEBI:57540"/>
        <dbReference type="ChEBI" id="CHEBI:57945"/>
        <dbReference type="EC" id="1.1.1.67"/>
    </reaction>
</comment>
<comment type="subunit">
    <text evidence="1">Monomer.</text>
</comment>
<comment type="similarity">
    <text evidence="2">Belongs to the mannitol dehydrogenase family.</text>
</comment>
<gene>
    <name type="ORF">PTRG_03680</name>
</gene>
<protein>
    <recommendedName>
        <fullName>Mannitol 2-dehydrogenase</fullName>
        <shortName>M2DH</shortName>
        <shortName>MDH</shortName>
        <ecNumber>1.1.1.67</ecNumber>
    </recommendedName>
</protein>
<evidence type="ECO:0000250" key="1"/>
<evidence type="ECO:0000305" key="2"/>
<keyword id="KW-0520">NAD</keyword>
<keyword id="KW-0560">Oxidoreductase</keyword>
<keyword id="KW-1185">Reference proteome</keyword>
<reference key="1">
    <citation type="journal article" date="2013" name="G3 (Bethesda)">
        <title>Comparative genomics of a plant-pathogenic fungus, Pyrenophora tritici-repentis, reveals transduplication and the impact of repeat elements on pathogenicity and population divergence.</title>
        <authorList>
            <person name="Manning V.A."/>
            <person name="Pandelova I."/>
            <person name="Dhillon B."/>
            <person name="Wilhelm L.J."/>
            <person name="Goodwin S.B."/>
            <person name="Berlin A.M."/>
            <person name="Figueroa M."/>
            <person name="Freitag M."/>
            <person name="Hane J.K."/>
            <person name="Henrissat B."/>
            <person name="Holman W.H."/>
            <person name="Kodira C.D."/>
            <person name="Martin J."/>
            <person name="Oliver R.P."/>
            <person name="Robbertse B."/>
            <person name="Schackwitz W."/>
            <person name="Schwartz D.C."/>
            <person name="Spatafora J.W."/>
            <person name="Turgeon B.G."/>
            <person name="Yandava C."/>
            <person name="Young S."/>
            <person name="Zhou S."/>
            <person name="Zeng Q."/>
            <person name="Grigoriev I.V."/>
            <person name="Ma L.-J."/>
            <person name="Ciuffetti L.M."/>
        </authorList>
    </citation>
    <scope>NUCLEOTIDE SEQUENCE [LARGE SCALE GENOMIC DNA]</scope>
    <source>
        <strain>Pt-1C-BFP</strain>
    </source>
</reference>
<feature type="chain" id="PRO_0000371548" description="Mannitol 2-dehydrogenase">
    <location>
        <begin position="1"/>
        <end position="566"/>
    </location>
</feature>
<feature type="binding site" evidence="1">
    <location>
        <begin position="106"/>
        <end position="117"/>
    </location>
    <ligand>
        <name>NAD(+)</name>
        <dbReference type="ChEBI" id="CHEBI:57540"/>
    </ligand>
</feature>